<keyword id="KW-0423">Lactose metabolism</keyword>
<keyword id="KW-0456">Lyase</keyword>
<reference key="1">
    <citation type="journal article" date="2004" name="J. Infect. Dis.">
        <title>Progress toward characterization of the group A Streptococcus metagenome: complete genome sequence of a macrolide-resistant serotype M6 strain.</title>
        <authorList>
            <person name="Banks D.J."/>
            <person name="Porcella S.F."/>
            <person name="Barbian K.D."/>
            <person name="Beres S.B."/>
            <person name="Philips L.E."/>
            <person name="Voyich J.M."/>
            <person name="DeLeo F.R."/>
            <person name="Martin J.M."/>
            <person name="Somerville G.A."/>
            <person name="Musser J.M."/>
        </authorList>
    </citation>
    <scope>NUCLEOTIDE SEQUENCE [LARGE SCALE GENOMIC DNA]</scope>
    <source>
        <strain>ATCC BAA-946 / MGAS10394</strain>
    </source>
</reference>
<name>LACD1_STRP6</name>
<organism>
    <name type="scientific">Streptococcus pyogenes serotype M6 (strain ATCC BAA-946 / MGAS10394)</name>
    <dbReference type="NCBI Taxonomy" id="286636"/>
    <lineage>
        <taxon>Bacteria</taxon>
        <taxon>Bacillati</taxon>
        <taxon>Bacillota</taxon>
        <taxon>Bacilli</taxon>
        <taxon>Lactobacillales</taxon>
        <taxon>Streptococcaceae</taxon>
        <taxon>Streptococcus</taxon>
    </lineage>
</organism>
<dbReference type="EC" id="4.1.2.40" evidence="1"/>
<dbReference type="EMBL" id="CP000003">
    <property type="protein sequence ID" value="AAT87579.1"/>
    <property type="molecule type" value="Genomic_DNA"/>
</dbReference>
<dbReference type="SMR" id="Q5XAI4"/>
<dbReference type="KEGG" id="spa:M6_Spy1444"/>
<dbReference type="HOGENOM" id="CLU_058971_0_1_9"/>
<dbReference type="UniPathway" id="UPA00704">
    <property type="reaction ID" value="UER00716"/>
</dbReference>
<dbReference type="Proteomes" id="UP000001167">
    <property type="component" value="Chromosome"/>
</dbReference>
<dbReference type="GO" id="GO:0061595">
    <property type="term" value="F:6-deoxy-6-sulfofructose-1-phosphate aldolase activity"/>
    <property type="evidence" value="ECO:0007669"/>
    <property type="project" value="TreeGrafter"/>
</dbReference>
<dbReference type="GO" id="GO:0009024">
    <property type="term" value="F:tagatose-6-phosphate kinase activity"/>
    <property type="evidence" value="ECO:0007669"/>
    <property type="project" value="InterPro"/>
</dbReference>
<dbReference type="GO" id="GO:0009025">
    <property type="term" value="F:tagatose-bisphosphate aldolase activity"/>
    <property type="evidence" value="ECO:0007669"/>
    <property type="project" value="UniProtKB-UniRule"/>
</dbReference>
<dbReference type="GO" id="GO:1902777">
    <property type="term" value="P:6-sulfoquinovose(1-) catabolic process"/>
    <property type="evidence" value="ECO:0007669"/>
    <property type="project" value="TreeGrafter"/>
</dbReference>
<dbReference type="GO" id="GO:2001059">
    <property type="term" value="P:D-tagatose 6-phosphate catabolic process"/>
    <property type="evidence" value="ECO:0007669"/>
    <property type="project" value="UniProtKB-UniRule"/>
</dbReference>
<dbReference type="GO" id="GO:0019512">
    <property type="term" value="P:lactose catabolic process via tagatose-6-phosphate"/>
    <property type="evidence" value="ECO:0007669"/>
    <property type="project" value="InterPro"/>
</dbReference>
<dbReference type="FunFam" id="3.20.20.70:FF:000137">
    <property type="entry name" value="Tagatose 1,6-diphosphate aldolase 2"/>
    <property type="match status" value="1"/>
</dbReference>
<dbReference type="Gene3D" id="3.20.20.70">
    <property type="entry name" value="Aldolase class I"/>
    <property type="match status" value="1"/>
</dbReference>
<dbReference type="HAMAP" id="MF_00734">
    <property type="entry name" value="LacD"/>
    <property type="match status" value="1"/>
</dbReference>
<dbReference type="InterPro" id="IPR013785">
    <property type="entry name" value="Aldolase_TIM"/>
</dbReference>
<dbReference type="InterPro" id="IPR002915">
    <property type="entry name" value="DeoC/FbaB/LacD_aldolase"/>
</dbReference>
<dbReference type="InterPro" id="IPR050552">
    <property type="entry name" value="LacD_aldolase"/>
</dbReference>
<dbReference type="InterPro" id="IPR005927">
    <property type="entry name" value="Tag_1.6-dipho_adolase"/>
</dbReference>
<dbReference type="NCBIfam" id="TIGR01232">
    <property type="entry name" value="lacD"/>
    <property type="match status" value="1"/>
</dbReference>
<dbReference type="NCBIfam" id="NF003180">
    <property type="entry name" value="PRK04161.1"/>
    <property type="match status" value="1"/>
</dbReference>
<dbReference type="NCBIfam" id="NF009065">
    <property type="entry name" value="PRK12399.1"/>
    <property type="match status" value="1"/>
</dbReference>
<dbReference type="NCBIfam" id="NF009498">
    <property type="entry name" value="PRK12858.1"/>
    <property type="match status" value="1"/>
</dbReference>
<dbReference type="PANTHER" id="PTHR39340">
    <property type="entry name" value="SULFOFRUCTOSEPHOSPHATE ALDOLASE"/>
    <property type="match status" value="1"/>
</dbReference>
<dbReference type="PANTHER" id="PTHR39340:SF1">
    <property type="entry name" value="SULFOFRUCTOSEPHOSPHATE ALDOLASE"/>
    <property type="match status" value="1"/>
</dbReference>
<dbReference type="Pfam" id="PF01791">
    <property type="entry name" value="DeoC"/>
    <property type="match status" value="1"/>
</dbReference>
<dbReference type="SMART" id="SM01133">
    <property type="entry name" value="DeoC"/>
    <property type="match status" value="1"/>
</dbReference>
<dbReference type="SUPFAM" id="SSF51569">
    <property type="entry name" value="Aldolase"/>
    <property type="match status" value="1"/>
</dbReference>
<evidence type="ECO:0000255" key="1">
    <source>
        <dbReference type="HAMAP-Rule" id="MF_00734"/>
    </source>
</evidence>
<accession>Q5XAI4</accession>
<gene>
    <name evidence="1" type="primary">lacD1</name>
    <name type="ordered locus">M6_Spy1444</name>
</gene>
<comment type="catalytic activity">
    <reaction evidence="1">
        <text>D-tagatofuranose 1,6-bisphosphate = D-glyceraldehyde 3-phosphate + dihydroxyacetone phosphate</text>
        <dbReference type="Rhea" id="RHEA:22948"/>
        <dbReference type="ChEBI" id="CHEBI:57642"/>
        <dbReference type="ChEBI" id="CHEBI:58694"/>
        <dbReference type="ChEBI" id="CHEBI:59776"/>
        <dbReference type="EC" id="4.1.2.40"/>
    </reaction>
</comment>
<comment type="pathway">
    <text evidence="1">Carbohydrate metabolism; D-tagatose 6-phosphate degradation; D-glyceraldehyde 3-phosphate and glycerone phosphate from D-tagatose 6-phosphate: step 2/2.</text>
</comment>
<comment type="similarity">
    <text evidence="1">Belongs to the aldolase LacD family.</text>
</comment>
<proteinExistence type="inferred from homology"/>
<sequence length="325" mass="35983">MTITANKRHYLEKVSHQGIISALAFDQRGALKQMMAAHQEGEATVTQIETLKVLVSEELTPYASSILLDPEYGLLATKVKANQTGLLLAYEKTGYDATTTSRLPDCLVEWSVKRLKAAGADAIKFLLYYDVDGDEQINLQKQAYIERIGSECTAEDIPFFLELLSYDERISDNNSAAYAKLKPHKVNGAMSVFSDKRFGVDVLKVEVPVNMAYVEGFTEGEVHYSQAEAIKAFQDQEAASHLPYIYLSAGVSAKLFQETLYFAAAAGAQFSGVLCGRATWAGSVPVYITKGEDEARKWLCTEGFQNIDELNRVLEETASPWTEKI</sequence>
<feature type="chain" id="PRO_0000203963" description="Tagatose 1,6-diphosphate aldolase 1">
    <location>
        <begin position="1"/>
        <end position="325"/>
    </location>
</feature>
<protein>
    <recommendedName>
        <fullName evidence="1">Tagatose 1,6-diphosphate aldolase 1</fullName>
        <ecNumber evidence="1">4.1.2.40</ecNumber>
    </recommendedName>
    <alternativeName>
        <fullName evidence="1">D-tagatose-1,6-bisphosphate aldolase 1</fullName>
    </alternativeName>
    <alternativeName>
        <fullName evidence="1">Tagatose-bisphosphate aldolase 1</fullName>
    </alternativeName>
</protein>